<organism>
    <name type="scientific">Staphylococcus aureus (strain NCTC 8325 / PS 47)</name>
    <dbReference type="NCBI Taxonomy" id="93061"/>
    <lineage>
        <taxon>Bacteria</taxon>
        <taxon>Bacillati</taxon>
        <taxon>Bacillota</taxon>
        <taxon>Bacilli</taxon>
        <taxon>Bacillales</taxon>
        <taxon>Staphylococcaceae</taxon>
        <taxon>Staphylococcus</taxon>
    </lineage>
</organism>
<keyword id="KW-0028">Amino-acid biosynthesis</keyword>
<keyword id="KW-0963">Cytoplasm</keyword>
<keyword id="KW-0220">Diaminopimelate biosynthesis</keyword>
<keyword id="KW-0456">Lyase</keyword>
<keyword id="KW-0457">Lysine biosynthesis</keyword>
<keyword id="KW-1185">Reference proteome</keyword>
<keyword id="KW-0704">Schiff base</keyword>
<protein>
    <recommendedName>
        <fullName evidence="1">4-hydroxy-tetrahydrodipicolinate synthase</fullName>
        <shortName evidence="1">HTPA synthase</shortName>
        <ecNumber evidence="1">4.3.3.7</ecNumber>
    </recommendedName>
</protein>
<proteinExistence type="inferred from homology"/>
<name>DAPA_STAA8</name>
<dbReference type="EC" id="4.3.3.7" evidence="1"/>
<dbReference type="EMBL" id="AF306669">
    <property type="protein sequence ID" value="AAG42246.1"/>
    <property type="molecule type" value="Genomic_DNA"/>
</dbReference>
<dbReference type="EMBL" id="CP000253">
    <property type="protein sequence ID" value="ABD30490.1"/>
    <property type="molecule type" value="Genomic_DNA"/>
</dbReference>
<dbReference type="RefSeq" id="WP_000149257.1">
    <property type="nucleotide sequence ID" value="NZ_LS483365.1"/>
</dbReference>
<dbReference type="RefSeq" id="YP_499923.1">
    <property type="nucleotide sequence ID" value="NC_007795.1"/>
</dbReference>
<dbReference type="SMR" id="Q9EZ12"/>
<dbReference type="STRING" id="93061.SAOUHSC_01396"/>
<dbReference type="PaxDb" id="1280-SAXN108_1411"/>
<dbReference type="GeneID" id="3920686"/>
<dbReference type="KEGG" id="sao:SAOUHSC_01396"/>
<dbReference type="PATRIC" id="fig|93061.5.peg.1277"/>
<dbReference type="eggNOG" id="COG0329">
    <property type="taxonomic scope" value="Bacteria"/>
</dbReference>
<dbReference type="HOGENOM" id="CLU_049343_7_0_9"/>
<dbReference type="OrthoDB" id="9782828at2"/>
<dbReference type="UniPathway" id="UPA00034">
    <property type="reaction ID" value="UER00017"/>
</dbReference>
<dbReference type="PRO" id="PR:Q9EZ12"/>
<dbReference type="Proteomes" id="UP000008816">
    <property type="component" value="Chromosome"/>
</dbReference>
<dbReference type="GO" id="GO:0005829">
    <property type="term" value="C:cytosol"/>
    <property type="evidence" value="ECO:0000318"/>
    <property type="project" value="GO_Central"/>
</dbReference>
<dbReference type="GO" id="GO:0008840">
    <property type="term" value="F:4-hydroxy-tetrahydrodipicolinate synthase activity"/>
    <property type="evidence" value="ECO:0000318"/>
    <property type="project" value="GO_Central"/>
</dbReference>
<dbReference type="GO" id="GO:0019877">
    <property type="term" value="P:diaminopimelate biosynthetic process"/>
    <property type="evidence" value="ECO:0007669"/>
    <property type="project" value="UniProtKB-UniRule"/>
</dbReference>
<dbReference type="GO" id="GO:0009089">
    <property type="term" value="P:lysine biosynthetic process via diaminopimelate"/>
    <property type="evidence" value="ECO:0007669"/>
    <property type="project" value="UniProtKB-UniRule"/>
</dbReference>
<dbReference type="CDD" id="cd00950">
    <property type="entry name" value="DHDPS"/>
    <property type="match status" value="1"/>
</dbReference>
<dbReference type="Gene3D" id="3.20.20.70">
    <property type="entry name" value="Aldolase class I"/>
    <property type="match status" value="1"/>
</dbReference>
<dbReference type="HAMAP" id="MF_00418">
    <property type="entry name" value="DapA"/>
    <property type="match status" value="1"/>
</dbReference>
<dbReference type="InterPro" id="IPR013785">
    <property type="entry name" value="Aldolase_TIM"/>
</dbReference>
<dbReference type="InterPro" id="IPR005263">
    <property type="entry name" value="DapA"/>
</dbReference>
<dbReference type="InterPro" id="IPR002220">
    <property type="entry name" value="DapA-like"/>
</dbReference>
<dbReference type="InterPro" id="IPR020625">
    <property type="entry name" value="Schiff_base-form_aldolases_AS"/>
</dbReference>
<dbReference type="NCBIfam" id="TIGR00674">
    <property type="entry name" value="dapA"/>
    <property type="match status" value="1"/>
</dbReference>
<dbReference type="PANTHER" id="PTHR12128:SF66">
    <property type="entry name" value="4-HYDROXY-2-OXOGLUTARATE ALDOLASE, MITOCHONDRIAL"/>
    <property type="match status" value="1"/>
</dbReference>
<dbReference type="PANTHER" id="PTHR12128">
    <property type="entry name" value="DIHYDRODIPICOLINATE SYNTHASE"/>
    <property type="match status" value="1"/>
</dbReference>
<dbReference type="Pfam" id="PF00701">
    <property type="entry name" value="DHDPS"/>
    <property type="match status" value="1"/>
</dbReference>
<dbReference type="PIRSF" id="PIRSF001365">
    <property type="entry name" value="DHDPS"/>
    <property type="match status" value="1"/>
</dbReference>
<dbReference type="PRINTS" id="PR00146">
    <property type="entry name" value="DHPICSNTHASE"/>
</dbReference>
<dbReference type="SMART" id="SM01130">
    <property type="entry name" value="DHDPS"/>
    <property type="match status" value="1"/>
</dbReference>
<dbReference type="SUPFAM" id="SSF51569">
    <property type="entry name" value="Aldolase"/>
    <property type="match status" value="1"/>
</dbReference>
<dbReference type="PROSITE" id="PS00666">
    <property type="entry name" value="DHDPS_2"/>
    <property type="match status" value="1"/>
</dbReference>
<comment type="function">
    <text evidence="1">Catalyzes the condensation of (S)-aspartate-beta-semialdehyde [(S)-ASA] and pyruvate to 4-hydroxy-tetrahydrodipicolinate (HTPA).</text>
</comment>
<comment type="catalytic activity">
    <reaction evidence="1">
        <text>L-aspartate 4-semialdehyde + pyruvate = (2S,4S)-4-hydroxy-2,3,4,5-tetrahydrodipicolinate + H2O + H(+)</text>
        <dbReference type="Rhea" id="RHEA:34171"/>
        <dbReference type="ChEBI" id="CHEBI:15361"/>
        <dbReference type="ChEBI" id="CHEBI:15377"/>
        <dbReference type="ChEBI" id="CHEBI:15378"/>
        <dbReference type="ChEBI" id="CHEBI:67139"/>
        <dbReference type="ChEBI" id="CHEBI:537519"/>
        <dbReference type="EC" id="4.3.3.7"/>
    </reaction>
</comment>
<comment type="pathway">
    <text evidence="1">Amino-acid biosynthesis; L-lysine biosynthesis via DAP pathway; (S)-tetrahydrodipicolinate from L-aspartate: step 3/4.</text>
</comment>
<comment type="subunit">
    <text evidence="1">Homodimer.</text>
</comment>
<comment type="subcellular location">
    <subcellularLocation>
        <location evidence="1">Cytoplasm</location>
    </subcellularLocation>
</comment>
<comment type="similarity">
    <text evidence="1">Belongs to the DapA family.</text>
</comment>
<comment type="caution">
    <text evidence="2">Was originally thought to be a dihydrodipicolinate synthase (DHDPS), catalyzing the condensation of (S)-aspartate-beta-semialdehyde [(S)-ASA] and pyruvate to dihydrodipicolinate (DHDP). However, it was shown in E.coli that the product of the enzymatic reaction is not dihydrodipicolinate but in fact (4S)-4-hydroxy-2,3,4,5-tetrahydro-(2S)-dipicolinic acid (HTPA), and that the consecutive dehydration reaction leading to DHDP is not spontaneous but catalyzed by DapB.</text>
</comment>
<evidence type="ECO:0000255" key="1">
    <source>
        <dbReference type="HAMAP-Rule" id="MF_00418"/>
    </source>
</evidence>
<evidence type="ECO:0000305" key="2"/>
<accession>Q9EZ12</accession>
<accession>Q2FYN9</accession>
<sequence>MTHLFEGVGVALTTPFTNNKVNIEALKTHVNFLLENNAQAIIVNGTTAESPTLTTDEKERILKTVIDLVDKRVPVIAGTGTNDTEKSIQASIQAKALGADAIMLITPYYNKTNQRGLVKHFEAIADAVKLPVVLYNVPSRTNMTIEPETVEILSQHPYIVALKDATNDFEYLEEVKKRIDTNSFALYSGNDDNVVEYYQRGGQGVISVIANVIPKEFQALYDAQQSGLDIQDQFKPIGTLLSALSVDINPIPIKALTSYLGFGNYELRLPLVSLEDTDTKVLRETYDTFKAGENE</sequence>
<gene>
    <name evidence="1" type="primary">dapA</name>
    <name type="ordered locus">SAOUHSC_01396</name>
</gene>
<reference key="1">
    <citation type="journal article" date="2001" name="Infect. Immun.">
        <title>Identification and analysis of Staphylococcus aureus components expressed by a model system of growth in serum.</title>
        <authorList>
            <person name="Wiltshire M.D."/>
            <person name="Foster S.J."/>
        </authorList>
    </citation>
    <scope>NUCLEOTIDE SEQUENCE [GENOMIC DNA]</scope>
</reference>
<reference key="2">
    <citation type="book" date="2006" name="Gram positive pathogens, 2nd edition">
        <title>The Staphylococcus aureus NCTC 8325 genome.</title>
        <editorList>
            <person name="Fischetti V."/>
            <person name="Novick R."/>
            <person name="Ferretti J."/>
            <person name="Portnoy D."/>
            <person name="Rood J."/>
        </editorList>
        <authorList>
            <person name="Gillaspy A.F."/>
            <person name="Worrell V."/>
            <person name="Orvis J."/>
            <person name="Roe B.A."/>
            <person name="Dyer D.W."/>
            <person name="Iandolo J.J."/>
        </authorList>
    </citation>
    <scope>NUCLEOTIDE SEQUENCE [LARGE SCALE GENOMIC DNA]</scope>
    <source>
        <strain>NCTC 8325 / PS 47</strain>
    </source>
</reference>
<feature type="chain" id="PRO_0000103160" description="4-hydroxy-tetrahydrodipicolinate synthase">
    <location>
        <begin position="1"/>
        <end position="295"/>
    </location>
</feature>
<feature type="active site" description="Proton donor/acceptor" evidence="1">
    <location>
        <position position="135"/>
    </location>
</feature>
<feature type="active site" description="Schiff-base intermediate with substrate" evidence="1">
    <location>
        <position position="163"/>
    </location>
</feature>
<feature type="binding site" evidence="1">
    <location>
        <position position="47"/>
    </location>
    <ligand>
        <name>pyruvate</name>
        <dbReference type="ChEBI" id="CHEBI:15361"/>
    </ligand>
</feature>
<feature type="binding site" evidence="1">
    <location>
        <position position="206"/>
    </location>
    <ligand>
        <name>pyruvate</name>
        <dbReference type="ChEBI" id="CHEBI:15361"/>
    </ligand>
</feature>
<feature type="site" description="Part of a proton relay during catalysis" evidence="1">
    <location>
        <position position="46"/>
    </location>
</feature>
<feature type="site" description="Part of a proton relay during catalysis" evidence="1">
    <location>
        <position position="109"/>
    </location>
</feature>